<keyword id="KW-0044">Antibiotic</keyword>
<keyword id="KW-0929">Antimicrobial</keyword>
<keyword id="KW-1015">Disulfide bond</keyword>
<keyword id="KW-0964">Secreted</keyword>
<keyword id="KW-0732">Signal</keyword>
<sequence length="76" mass="7912">MQARVFLLLLGVILLGMMGPMVSAQDGKAGSCPDVNQPIPPLGVCKTTCATDSNCPDIQKCCKNGCGHMSCTRPST</sequence>
<evidence type="ECO:0000250" key="1">
    <source>
        <dbReference type="UniProtKB" id="P83952"/>
    </source>
</evidence>
<evidence type="ECO:0000255" key="2"/>
<evidence type="ECO:0000255" key="3">
    <source>
        <dbReference type="PROSITE-ProRule" id="PRU00722"/>
    </source>
</evidence>
<evidence type="ECO:0000303" key="4">
    <source>
    </source>
</evidence>
<evidence type="ECO:0000305" key="5"/>
<evidence type="ECO:0000305" key="6">
    <source>
    </source>
</evidence>
<dbReference type="EMBL" id="EU029741">
    <property type="protein sequence ID" value="ABU68541.1"/>
    <property type="molecule type" value="mRNA"/>
</dbReference>
<dbReference type="SMR" id="A7X4J4"/>
<dbReference type="GO" id="GO:0005576">
    <property type="term" value="C:extracellular region"/>
    <property type="evidence" value="ECO:0000250"/>
    <property type="project" value="UniProtKB"/>
</dbReference>
<dbReference type="GO" id="GO:0030414">
    <property type="term" value="F:peptidase inhibitor activity"/>
    <property type="evidence" value="ECO:0007669"/>
    <property type="project" value="InterPro"/>
</dbReference>
<dbReference type="GO" id="GO:0042742">
    <property type="term" value="P:defense response to bacterium"/>
    <property type="evidence" value="ECO:0007669"/>
    <property type="project" value="UniProtKB-KW"/>
</dbReference>
<dbReference type="GO" id="GO:0044278">
    <property type="term" value="P:venom-mediated disruption of cell wall in another organism"/>
    <property type="evidence" value="ECO:0000250"/>
    <property type="project" value="UniProtKB"/>
</dbReference>
<dbReference type="FunFam" id="4.10.75.10:FF:000001">
    <property type="entry name" value="Anosmin 1"/>
    <property type="match status" value="1"/>
</dbReference>
<dbReference type="Gene3D" id="4.10.75.10">
    <property type="entry name" value="Elafin-like"/>
    <property type="match status" value="1"/>
</dbReference>
<dbReference type="InterPro" id="IPR036645">
    <property type="entry name" value="Elafin-like_sf"/>
</dbReference>
<dbReference type="InterPro" id="IPR008197">
    <property type="entry name" value="WAP_dom"/>
</dbReference>
<dbReference type="Pfam" id="PF00095">
    <property type="entry name" value="WAP"/>
    <property type="match status" value="1"/>
</dbReference>
<dbReference type="SMART" id="SM00217">
    <property type="entry name" value="WAP"/>
    <property type="match status" value="1"/>
</dbReference>
<dbReference type="SUPFAM" id="SSF57256">
    <property type="entry name" value="Elafin-like"/>
    <property type="match status" value="1"/>
</dbReference>
<dbReference type="PROSITE" id="PS51390">
    <property type="entry name" value="WAP"/>
    <property type="match status" value="1"/>
</dbReference>
<feature type="signal peptide" evidence="2">
    <location>
        <begin position="1"/>
        <end position="24"/>
    </location>
</feature>
<feature type="chain" id="PRO_0000314690" description="Waprin-Rha1">
    <location>
        <begin position="25"/>
        <end position="76"/>
    </location>
</feature>
<feature type="domain" description="WAP" evidence="3">
    <location>
        <begin position="25"/>
        <end position="75"/>
    </location>
</feature>
<feature type="disulfide bond" evidence="3">
    <location>
        <begin position="32"/>
        <end position="62"/>
    </location>
</feature>
<feature type="disulfide bond" evidence="3">
    <location>
        <begin position="45"/>
        <end position="66"/>
    </location>
</feature>
<feature type="disulfide bond" evidence="3">
    <location>
        <begin position="49"/>
        <end position="61"/>
    </location>
</feature>
<feature type="disulfide bond" evidence="3">
    <location>
        <begin position="55"/>
        <end position="71"/>
    </location>
</feature>
<protein>
    <recommendedName>
        <fullName evidence="4">Waprin-Rha1</fullName>
    </recommendedName>
</protein>
<proteinExistence type="inferred from homology"/>
<organism>
    <name type="scientific">Rhabdophis tigrinus tigrinus</name>
    <name type="common">Tiger keelback snake</name>
    <dbReference type="NCBI Taxonomy" id="193080"/>
    <lineage>
        <taxon>Eukaryota</taxon>
        <taxon>Metazoa</taxon>
        <taxon>Chordata</taxon>
        <taxon>Craniata</taxon>
        <taxon>Vertebrata</taxon>
        <taxon>Euteleostomi</taxon>
        <taxon>Lepidosauria</taxon>
        <taxon>Squamata</taxon>
        <taxon>Bifurcata</taxon>
        <taxon>Unidentata</taxon>
        <taxon>Episquamata</taxon>
        <taxon>Toxicofera</taxon>
        <taxon>Serpentes</taxon>
        <taxon>Colubroidea</taxon>
        <taxon>Colubridae</taxon>
        <taxon>Natricinae</taxon>
        <taxon>Rhabdophis</taxon>
    </lineage>
</organism>
<reference key="1">
    <citation type="journal article" date="2008" name="Mol. Cell. Proteomics">
        <title>Evolution of an arsenal: structural and functional diversification of the venom system in the advanced snakes (Caenophidia).</title>
        <authorList>
            <person name="Fry B.G."/>
            <person name="Scheib H."/>
            <person name="van der Weerd L."/>
            <person name="Young B."/>
            <person name="McNaughtan J."/>
            <person name="Ramjan S.F.R."/>
            <person name="Vidal N."/>
            <person name="Poelmann R.E."/>
            <person name="Norman J.A."/>
        </authorList>
    </citation>
    <scope>NUCLEOTIDE SEQUENCE [MRNA]</scope>
    <source>
        <tissue>Venom gland</tissue>
    </source>
</reference>
<name>WAP1_RHATT</name>
<accession>A7X4J4</accession>
<comment type="function">
    <text evidence="1">Damages membranes of susceptible bacteria. Has no hemolytic activity. Not toxic to mice. Does not inhibit the proteinases elastase and cathepsin G.</text>
</comment>
<comment type="subcellular location">
    <subcellularLocation>
        <location evidence="6">Secreted</location>
    </subcellularLocation>
</comment>
<comment type="tissue specificity">
    <text evidence="6">Expressed by the venom gland.</text>
</comment>
<comment type="similarity">
    <text evidence="5">Belongs to the venom waprin family.</text>
</comment>